<evidence type="ECO:0000250" key="1">
    <source>
        <dbReference type="UniProtKB" id="Q16540"/>
    </source>
</evidence>
<evidence type="ECO:0000256" key="2">
    <source>
        <dbReference type="SAM" id="MobiDB-lite"/>
    </source>
</evidence>
<evidence type="ECO:0000305" key="3"/>
<keyword id="KW-0496">Mitochondrion</keyword>
<keyword id="KW-1185">Reference proteome</keyword>
<keyword id="KW-0687">Ribonucleoprotein</keyword>
<keyword id="KW-0689">Ribosomal protein</keyword>
<dbReference type="EMBL" id="U62635">
    <property type="protein sequence ID" value="AAB05795.1"/>
    <property type="molecule type" value="mRNA"/>
</dbReference>
<dbReference type="RefSeq" id="NP_071974.1">
    <property type="nucleotide sequence ID" value="NM_022529.1"/>
</dbReference>
<dbReference type="SMR" id="Q63750"/>
<dbReference type="FunCoup" id="Q63750">
    <property type="interactions" value="77"/>
</dbReference>
<dbReference type="IntAct" id="Q63750">
    <property type="interactions" value="1"/>
</dbReference>
<dbReference type="STRING" id="10116.ENSRNOP00000027585"/>
<dbReference type="PhosphoSitePlus" id="Q63750"/>
<dbReference type="PaxDb" id="10116-ENSRNOP00000027585"/>
<dbReference type="GeneID" id="64360"/>
<dbReference type="KEGG" id="rno:64360"/>
<dbReference type="UCSC" id="RGD:68343">
    <property type="organism name" value="rat"/>
</dbReference>
<dbReference type="AGR" id="RGD:68343"/>
<dbReference type="CTD" id="6150"/>
<dbReference type="RGD" id="68343">
    <property type="gene designation" value="Mrpl23"/>
</dbReference>
<dbReference type="VEuPathDB" id="HostDB:ENSRNOG00000020354"/>
<dbReference type="eggNOG" id="KOG4089">
    <property type="taxonomic scope" value="Eukaryota"/>
</dbReference>
<dbReference type="HOGENOM" id="CLU_103097_1_0_1"/>
<dbReference type="InParanoid" id="Q63750"/>
<dbReference type="OrthoDB" id="40249at9989"/>
<dbReference type="PhylomeDB" id="Q63750"/>
<dbReference type="TreeFam" id="TF105852"/>
<dbReference type="Reactome" id="R-RNO-5389840">
    <property type="pathway name" value="Mitochondrial translation elongation"/>
</dbReference>
<dbReference type="Reactome" id="R-RNO-5419276">
    <property type="pathway name" value="Mitochondrial translation termination"/>
</dbReference>
<dbReference type="PRO" id="PR:Q63750"/>
<dbReference type="Proteomes" id="UP000002494">
    <property type="component" value="Chromosome 1"/>
</dbReference>
<dbReference type="Bgee" id="ENSRNOG00000020354">
    <property type="expression patterns" value="Expressed in pancreas and 20 other cell types or tissues"/>
</dbReference>
<dbReference type="GO" id="GO:0022626">
    <property type="term" value="C:cytosolic ribosome"/>
    <property type="evidence" value="ECO:0007669"/>
    <property type="project" value="UniProtKB-ARBA"/>
</dbReference>
<dbReference type="GO" id="GO:0005762">
    <property type="term" value="C:mitochondrial large ribosomal subunit"/>
    <property type="evidence" value="ECO:0000250"/>
    <property type="project" value="UniProtKB"/>
</dbReference>
<dbReference type="GO" id="GO:0003735">
    <property type="term" value="F:structural constituent of ribosome"/>
    <property type="evidence" value="ECO:0000318"/>
    <property type="project" value="GO_Central"/>
</dbReference>
<dbReference type="GO" id="GO:0032543">
    <property type="term" value="P:mitochondrial translation"/>
    <property type="evidence" value="ECO:0000318"/>
    <property type="project" value="GO_Central"/>
</dbReference>
<dbReference type="FunFam" id="3.30.70.330:FF:000284">
    <property type="entry name" value="39S ribosomal protein L23, mitochondrial"/>
    <property type="match status" value="1"/>
</dbReference>
<dbReference type="Gene3D" id="3.30.70.330">
    <property type="match status" value="1"/>
</dbReference>
<dbReference type="InterPro" id="IPR012677">
    <property type="entry name" value="Nucleotide-bd_a/b_plait_sf"/>
</dbReference>
<dbReference type="InterPro" id="IPR013025">
    <property type="entry name" value="Ribosomal_uL23-like"/>
</dbReference>
<dbReference type="InterPro" id="IPR012678">
    <property type="entry name" value="Ribosomal_uL23/eL15/eS24_sf"/>
</dbReference>
<dbReference type="PANTHER" id="PTHR12059:SF5">
    <property type="entry name" value="LARGE RIBOSOMAL SUBUNIT PROTEIN UL23M"/>
    <property type="match status" value="1"/>
</dbReference>
<dbReference type="PANTHER" id="PTHR12059">
    <property type="entry name" value="RIBOSOMAL PROTEIN L23-RELATED"/>
    <property type="match status" value="1"/>
</dbReference>
<dbReference type="Pfam" id="PF00276">
    <property type="entry name" value="Ribosomal_L23"/>
    <property type="match status" value="1"/>
</dbReference>
<dbReference type="SUPFAM" id="SSF54189">
    <property type="entry name" value="Ribosomal proteins S24e, L23 and L15e"/>
    <property type="match status" value="1"/>
</dbReference>
<gene>
    <name type="primary">Mrpl23</name>
    <name type="synonym">L23mrp</name>
</gene>
<protein>
    <recommendedName>
        <fullName evidence="3">Large ribosomal subunit protein uL23m</fullName>
    </recommendedName>
    <alternativeName>
        <fullName>39S ribosomal protein L23, mitochondrial</fullName>
        <shortName>L23mt</shortName>
        <shortName>MRP-L23</shortName>
    </alternativeName>
    <alternativeName>
        <fullName>L23 mitochondrial-related protein</fullName>
    </alternativeName>
</protein>
<organism>
    <name type="scientific">Rattus norvegicus</name>
    <name type="common">Rat</name>
    <dbReference type="NCBI Taxonomy" id="10116"/>
    <lineage>
        <taxon>Eukaryota</taxon>
        <taxon>Metazoa</taxon>
        <taxon>Chordata</taxon>
        <taxon>Craniata</taxon>
        <taxon>Vertebrata</taxon>
        <taxon>Euteleostomi</taxon>
        <taxon>Mammalia</taxon>
        <taxon>Eutheria</taxon>
        <taxon>Euarchontoglires</taxon>
        <taxon>Glires</taxon>
        <taxon>Rodentia</taxon>
        <taxon>Myomorpha</taxon>
        <taxon>Muroidea</taxon>
        <taxon>Muridae</taxon>
        <taxon>Murinae</taxon>
        <taxon>Rattus</taxon>
    </lineage>
</organism>
<feature type="chain" id="PRO_0000129486" description="Large ribosomal subunit protein uL23m">
    <location>
        <begin position="1"/>
        <end position="146"/>
    </location>
</feature>
<feature type="region of interest" description="Disordered" evidence="2">
    <location>
        <begin position="108"/>
        <end position="146"/>
    </location>
</feature>
<reference key="1">
    <citation type="submission" date="1996-06" db="EMBL/GenBank/DDBJ databases">
        <authorList>
            <person name="Qian N."/>
        </authorList>
    </citation>
    <scope>NUCLEOTIDE SEQUENCE [MRNA]</scope>
</reference>
<comment type="subunit">
    <text evidence="1">Component of the mitochondrial ribosome large subunit (39S) which comprises a 16S rRNA and about 50 distinct proteins.</text>
</comment>
<comment type="subcellular location">
    <subcellularLocation>
        <location evidence="1">Mitochondrion</location>
    </subcellularLocation>
</comment>
<comment type="similarity">
    <text evidence="3">Belongs to the universal ribosomal protein uL23 family.</text>
</comment>
<proteinExistence type="evidence at transcript level"/>
<name>RM23_RAT</name>
<sequence>MARNVLYPLYQLGGPQLRVFRTNFFIQLVRPGTAQPEDTVQFRIPMEMTRVDLRNYLEQIYNVPVAAVRTRVQHGSNRRRDHKNVRIKKPDYKVAYVQLAHGQTFTFPDLFPEKEPTSPDPLEEELPQQRQSSDPRCPGIPSWFGL</sequence>
<accession>Q63750</accession>